<feature type="chain" id="PRO_0000144732" description="Claudin-2">
    <location>
        <begin position="1"/>
        <end position="230"/>
    </location>
</feature>
<feature type="topological domain" description="Cytoplasmic" evidence="4">
    <location>
        <begin position="1"/>
        <end position="7"/>
    </location>
</feature>
<feature type="transmembrane region" description="Helical" evidence="4">
    <location>
        <begin position="8"/>
        <end position="28"/>
    </location>
</feature>
<feature type="topological domain" description="Extracellular" evidence="4">
    <location>
        <begin position="29"/>
        <end position="81"/>
    </location>
</feature>
<feature type="transmembrane region" description="Helical" evidence="4">
    <location>
        <begin position="82"/>
        <end position="102"/>
    </location>
</feature>
<feature type="topological domain" description="Cytoplasmic" evidence="4">
    <location>
        <begin position="103"/>
        <end position="116"/>
    </location>
</feature>
<feature type="transmembrane region" description="Helical" evidence="4">
    <location>
        <begin position="117"/>
        <end position="137"/>
    </location>
</feature>
<feature type="topological domain" description="Extracellular" evidence="4">
    <location>
        <begin position="138"/>
        <end position="162"/>
    </location>
</feature>
<feature type="transmembrane region" description="Helical" evidence="4">
    <location>
        <begin position="163"/>
        <end position="183"/>
    </location>
</feature>
<feature type="topological domain" description="Cytoplasmic" evidence="4">
    <location>
        <begin position="184"/>
        <end position="230"/>
    </location>
</feature>
<feature type="region of interest" description="Disordered" evidence="5">
    <location>
        <begin position="205"/>
        <end position="230"/>
    </location>
</feature>
<feature type="region of interest" description="Interaction with TJP1, TJP2 and TJP3" evidence="1">
    <location>
        <begin position="229"/>
        <end position="230"/>
    </location>
</feature>
<feature type="compositionally biased region" description="Polar residues" evidence="5">
    <location>
        <begin position="220"/>
        <end position="230"/>
    </location>
</feature>
<feature type="site" description="Paracellular cation selectivity" evidence="2">
    <location>
        <position position="65"/>
    </location>
</feature>
<feature type="modified residue" description="Phosphoserine" evidence="2">
    <location>
        <position position="219"/>
    </location>
</feature>
<feature type="modified residue" description="Phosphoserine" evidence="2">
    <location>
        <position position="223"/>
    </location>
</feature>
<feature type="disulfide bond" evidence="2">
    <location>
        <begin position="54"/>
        <end position="64"/>
    </location>
</feature>
<feature type="cross-link" description="Glycyl lysine isopeptide (Lys-Gly) (interchain with G-Cter in SUMO)" evidence="1">
    <location>
        <position position="218"/>
    </location>
</feature>
<reference key="1">
    <citation type="submission" date="2003-07" db="EMBL/GenBank/DDBJ databases">
        <title>Localization of claudin proteins in bovine kidneys.</title>
        <authorList>
            <person name="Ohta H."/>
            <person name="Takiguchi M."/>
            <person name="Inaba M."/>
        </authorList>
    </citation>
    <scope>NUCLEOTIDE SEQUENCE [MRNA]</scope>
    <source>
        <tissue>Kidney</tissue>
    </source>
</reference>
<reference key="2">
    <citation type="submission" date="2007-04" db="EMBL/GenBank/DDBJ databases">
        <authorList>
            <consortium name="NIH - Mammalian Gene Collection (MGC) project"/>
        </authorList>
    </citation>
    <scope>NUCLEOTIDE SEQUENCE [LARGE SCALE MRNA]</scope>
    <source>
        <strain>Hereford</strain>
        <tissue>Ascending colon</tissue>
    </source>
</reference>
<organism>
    <name type="scientific">Bos taurus</name>
    <name type="common">Bovine</name>
    <dbReference type="NCBI Taxonomy" id="9913"/>
    <lineage>
        <taxon>Eukaryota</taxon>
        <taxon>Metazoa</taxon>
        <taxon>Chordata</taxon>
        <taxon>Craniata</taxon>
        <taxon>Vertebrata</taxon>
        <taxon>Euteleostomi</taxon>
        <taxon>Mammalia</taxon>
        <taxon>Eutheria</taxon>
        <taxon>Laurasiatheria</taxon>
        <taxon>Artiodactyla</taxon>
        <taxon>Ruminantia</taxon>
        <taxon>Pecora</taxon>
        <taxon>Bovidae</taxon>
        <taxon>Bovinae</taxon>
        <taxon>Bos</taxon>
    </lineage>
</organism>
<name>CLD2_BOVIN</name>
<keyword id="KW-0965">Cell junction</keyword>
<keyword id="KW-1003">Cell membrane</keyword>
<keyword id="KW-1015">Disulfide bond</keyword>
<keyword id="KW-1017">Isopeptide bond</keyword>
<keyword id="KW-0472">Membrane</keyword>
<keyword id="KW-0597">Phosphoprotein</keyword>
<keyword id="KW-1185">Reference proteome</keyword>
<keyword id="KW-0796">Tight junction</keyword>
<keyword id="KW-0812">Transmembrane</keyword>
<keyword id="KW-1133">Transmembrane helix</keyword>
<keyword id="KW-0832">Ubl conjugation</keyword>
<dbReference type="EMBL" id="AB115779">
    <property type="protein sequence ID" value="BAD01111.1"/>
    <property type="molecule type" value="mRNA"/>
</dbReference>
<dbReference type="EMBL" id="BC140513">
    <property type="protein sequence ID" value="AAI40514.1"/>
    <property type="molecule type" value="mRNA"/>
</dbReference>
<dbReference type="RefSeq" id="NP_991350.1">
    <property type="nucleotide sequence ID" value="NM_205781.2"/>
</dbReference>
<dbReference type="SMR" id="Q765P1"/>
<dbReference type="FunCoup" id="Q765P1">
    <property type="interactions" value="196"/>
</dbReference>
<dbReference type="STRING" id="9913.ENSBTAP00000058360"/>
<dbReference type="PaxDb" id="9913-ENSBTAP00000006960"/>
<dbReference type="GeneID" id="404089"/>
<dbReference type="KEGG" id="bta:404089"/>
<dbReference type="CTD" id="9075"/>
<dbReference type="eggNOG" id="ENOG502R10A">
    <property type="taxonomic scope" value="Eukaryota"/>
</dbReference>
<dbReference type="HOGENOM" id="CLU_076370_1_1_1"/>
<dbReference type="InParanoid" id="Q765P1"/>
<dbReference type="OrthoDB" id="9446875at2759"/>
<dbReference type="TreeFam" id="TF331936"/>
<dbReference type="Proteomes" id="UP000009136">
    <property type="component" value="Unplaced"/>
</dbReference>
<dbReference type="GO" id="GO:0005923">
    <property type="term" value="C:bicellular tight junction"/>
    <property type="evidence" value="ECO:0000250"/>
    <property type="project" value="UniProtKB"/>
</dbReference>
<dbReference type="GO" id="GO:0005886">
    <property type="term" value="C:plasma membrane"/>
    <property type="evidence" value="ECO:0000318"/>
    <property type="project" value="GO_Central"/>
</dbReference>
<dbReference type="GO" id="GO:0070160">
    <property type="term" value="C:tight junction"/>
    <property type="evidence" value="ECO:0000250"/>
    <property type="project" value="UniProtKB"/>
</dbReference>
<dbReference type="GO" id="GO:0042802">
    <property type="term" value="F:identical protein binding"/>
    <property type="evidence" value="ECO:0000250"/>
    <property type="project" value="UniProtKB"/>
</dbReference>
<dbReference type="GO" id="GO:0160187">
    <property type="term" value="F:paracellular tight junction channel activity"/>
    <property type="evidence" value="ECO:0000250"/>
    <property type="project" value="UniProtKB"/>
</dbReference>
<dbReference type="GO" id="GO:0005198">
    <property type="term" value="F:structural molecule activity"/>
    <property type="evidence" value="ECO:0007669"/>
    <property type="project" value="InterPro"/>
</dbReference>
<dbReference type="GO" id="GO:0070830">
    <property type="term" value="P:bicellular tight junction assembly"/>
    <property type="evidence" value="ECO:0000318"/>
    <property type="project" value="GO_Central"/>
</dbReference>
<dbReference type="GO" id="GO:0016338">
    <property type="term" value="P:calcium-independent cell-cell adhesion via plasma membrane cell-adhesion molecules"/>
    <property type="evidence" value="ECO:0000318"/>
    <property type="project" value="GO_Central"/>
</dbReference>
<dbReference type="GO" id="GO:0098609">
    <property type="term" value="P:cell-cell adhesion"/>
    <property type="evidence" value="ECO:0000250"/>
    <property type="project" value="UniProtKB"/>
</dbReference>
<dbReference type="GO" id="GO:0002227">
    <property type="term" value="P:innate immune response in mucosa"/>
    <property type="evidence" value="ECO:0000250"/>
    <property type="project" value="UniProtKB"/>
</dbReference>
<dbReference type="GO" id="GO:0160184">
    <property type="term" value="P:paracellular transport"/>
    <property type="evidence" value="ECO:0000250"/>
    <property type="project" value="UniProtKB"/>
</dbReference>
<dbReference type="GO" id="GO:0120188">
    <property type="term" value="P:regulation of bile acid secretion"/>
    <property type="evidence" value="ECO:0000250"/>
    <property type="project" value="UniProtKB"/>
</dbReference>
<dbReference type="GO" id="GO:1903985">
    <property type="term" value="P:regulation of intestinal D-glucose absorption"/>
    <property type="evidence" value="ECO:0000250"/>
    <property type="project" value="UniProtKB"/>
</dbReference>
<dbReference type="GO" id="GO:1904729">
    <property type="term" value="P:regulation of intestinal lipid absorption"/>
    <property type="evidence" value="ECO:0000250"/>
    <property type="project" value="UniProtKB"/>
</dbReference>
<dbReference type="FunFam" id="1.20.140.150:FF:000001">
    <property type="entry name" value="Claudin"/>
    <property type="match status" value="1"/>
</dbReference>
<dbReference type="Gene3D" id="1.20.140.150">
    <property type="match status" value="1"/>
</dbReference>
<dbReference type="InterPro" id="IPR006187">
    <property type="entry name" value="Claudin"/>
</dbReference>
<dbReference type="InterPro" id="IPR005411">
    <property type="entry name" value="Claudin2"/>
</dbReference>
<dbReference type="InterPro" id="IPR017974">
    <property type="entry name" value="Claudin_CS"/>
</dbReference>
<dbReference type="InterPro" id="IPR004031">
    <property type="entry name" value="PMP22/EMP/MP20/Claudin"/>
</dbReference>
<dbReference type="PANTHER" id="PTHR12002">
    <property type="entry name" value="CLAUDIN"/>
    <property type="match status" value="1"/>
</dbReference>
<dbReference type="Pfam" id="PF00822">
    <property type="entry name" value="PMP22_Claudin"/>
    <property type="match status" value="1"/>
</dbReference>
<dbReference type="PRINTS" id="PR01077">
    <property type="entry name" value="CLAUDIN"/>
</dbReference>
<dbReference type="PRINTS" id="PR01589">
    <property type="entry name" value="CLAUDIN2"/>
</dbReference>
<dbReference type="PROSITE" id="PS01346">
    <property type="entry name" value="CLAUDIN"/>
    <property type="match status" value="1"/>
</dbReference>
<comment type="function">
    <text evidence="2">Forms paracellular channels: polymerizes in tight junction strands with cation- and water-selective channels through the strands, conveying epithelial permeability in a process known as paracellular tight junction permeability (By similarity). In intestinal epithelium, allows for sodium and water fluxes from the peritoneal side to the lumen of the intestine to regulate nutrient absorption and clear enteric pathogens as part of mucosal immune response (By similarity). In kidney, allows passive sodium and calcium reabsorption across proximal tubules from the lumen back to the bloodstream (By similarity). In the hepatobiliary tract, allows paracellular water and cation fluxes in the hepatic perivenous areas and biliary epithelium to generate bile flow and maintain osmotic gradients (By similarity).</text>
</comment>
<comment type="catalytic activity">
    <reaction evidence="2 3">
        <text>Na(+)(in) = Na(+)(out)</text>
        <dbReference type="Rhea" id="RHEA:34963"/>
        <dbReference type="ChEBI" id="CHEBI:29101"/>
    </reaction>
</comment>
<comment type="catalytic activity">
    <reaction evidence="2 3">
        <text>K(+)(in) = K(+)(out)</text>
        <dbReference type="Rhea" id="RHEA:29463"/>
        <dbReference type="ChEBI" id="CHEBI:29103"/>
    </reaction>
</comment>
<comment type="catalytic activity">
    <reaction evidence="2">
        <text>Rb(+)(in) = Rb(+)(out)</text>
        <dbReference type="Rhea" id="RHEA:78547"/>
        <dbReference type="ChEBI" id="CHEBI:49847"/>
    </reaction>
</comment>
<comment type="catalytic activity">
    <reaction evidence="2">
        <text>Li(+)(in) = Li(+)(out)</text>
        <dbReference type="Rhea" id="RHEA:78551"/>
        <dbReference type="ChEBI" id="CHEBI:49713"/>
    </reaction>
</comment>
<comment type="catalytic activity">
    <reaction evidence="2">
        <text>Cs(+)(in) = Cs(+)(out)</text>
        <dbReference type="Rhea" id="RHEA:78555"/>
        <dbReference type="ChEBI" id="CHEBI:49547"/>
    </reaction>
</comment>
<comment type="catalytic activity">
    <reaction evidence="2">
        <text>Ca(2+)(in) = Ca(2+)(out)</text>
        <dbReference type="Rhea" id="RHEA:29671"/>
        <dbReference type="ChEBI" id="CHEBI:29108"/>
    </reaction>
</comment>
<comment type="catalytic activity">
    <reaction evidence="2">
        <text>methylamine(out) = methylamine(in)</text>
        <dbReference type="Rhea" id="RHEA:74391"/>
        <dbReference type="ChEBI" id="CHEBI:59338"/>
    </reaction>
</comment>
<comment type="catalytic activity">
    <reaction evidence="2">
        <text>choline(out) = choline(in)</text>
        <dbReference type="Rhea" id="RHEA:32751"/>
        <dbReference type="ChEBI" id="CHEBI:15354"/>
    </reaction>
</comment>
<comment type="catalytic activity">
    <reaction evidence="2 3">
        <text>H2O(in) = H2O(out)</text>
        <dbReference type="Rhea" id="RHEA:29667"/>
        <dbReference type="ChEBI" id="CHEBI:15377"/>
    </reaction>
</comment>
<comment type="subunit">
    <text evidence="2">Can form homo- and heteropolymers with other claudins to mediate paracellular barrier and channel functions of tight junctions in response to physiological stimuli. Homopolymers interact with CLDN3, but not CLDN1, homopolymers. Directly interacts with TJP1/ZO-1, TJP2/ZO-2 and TJP3/ZO-3.</text>
</comment>
<comment type="subcellular location">
    <subcellularLocation>
        <location evidence="2">Cell junction</location>
        <location evidence="2">Tight junction</location>
    </subcellularLocation>
    <subcellularLocation>
        <location evidence="2">Cell membrane</location>
        <topology evidence="2">Multi-pass membrane protein</topology>
    </subcellularLocation>
</comment>
<comment type="PTM">
    <text evidence="2">The disulfide bond is necessary for pore formation, but is not required for correct protein trafficking.</text>
</comment>
<comment type="similarity">
    <text evidence="6">Belongs to the claudin family.</text>
</comment>
<sequence length="230" mass="24534">MASLGLQLVGYVLGLLGLLGTVIAMLLPSWRTSSYVGASIVTAVGFSKGLWMECATHSTGITQCDIYSTMLGLPADIQAAQAMMVTSSAMSSLACIVSVVGMRCTVFFQESRAKDRVAVVGGVFFILGGLLGFIPVAWNLHGILRDFYSPLVPDSMKFEIGEALYLGIISSLFSLIAGIFLCFSCSPQGNRSNYYDAYQAQPLATRSSPRPGQAPKGKSEFNSYSLTGYV</sequence>
<gene>
    <name type="primary">CLDN2</name>
</gene>
<protein>
    <recommendedName>
        <fullName>Claudin-2</fullName>
    </recommendedName>
</protein>
<accession>Q765P1</accession>
<accession>A5D7D2</accession>
<proteinExistence type="evidence at transcript level"/>
<evidence type="ECO:0000250" key="1"/>
<evidence type="ECO:0000250" key="2">
    <source>
        <dbReference type="UniProtKB" id="O88552"/>
    </source>
</evidence>
<evidence type="ECO:0000250" key="3">
    <source>
        <dbReference type="UniProtKB" id="P57739"/>
    </source>
</evidence>
<evidence type="ECO:0000255" key="4"/>
<evidence type="ECO:0000256" key="5">
    <source>
        <dbReference type="SAM" id="MobiDB-lite"/>
    </source>
</evidence>
<evidence type="ECO:0000305" key="6"/>